<keyword id="KW-0596">Phosphopantetheine</keyword>
<keyword id="KW-0597">Phosphoprotein</keyword>
<keyword id="KW-1185">Reference proteome</keyword>
<keyword id="KW-0808">Transferase</keyword>
<name>PKS41_DICDI</name>
<sequence>MDSKNLVDENCNKVAIIGIGFRFPNLKGDITPNELWSKLLNRYDGIVKNDRWNESFFKSGDISTNYAGFIPFEELKSFDPLFFGINPSEGIHMCPQQRLLLKCTWEALEDSGIDPIEIRGSNTSVFIGCSGADYQNLNKNDNKVQQEIFSSSTHSISNRVSYCFDLHGESMTIDTACSSSSNAIRRGYKSIIDGSSNISVVGGINILLDPNISKSYSRLNILSKDGKCKSFDAGADGYVRSDAAGIAILKNLNDAIKDDNNIYCVIDGSASNVDGNGFSDKSNFYSPSKSSQVECIRLALESTNGQVNENDIVYFEAHGTGTPTGDPIELESVSIALKTSENRSSDNPLLIGSFKPNIGHTESASGISSLIKCCLILKNQCFVPNLNFNKPNPLIKFDQWNLKVVTDPIDFSTLNYINKRVSIAINNFGVTGSNCCLIVSSFKGNQIRNNINNKSKSPKQYLIPFSTNSIKSLDLYKSRIDNNVEFKEFAENQIKSKSKKLIQRSVVIASNWDEFNLKSNTINTSNDKLTSNMLVSSNKKNVTMVFVFCGQGAQYSTMAKNLYDNEPIFKKSMDKIDSKLNEYYGFSILEKLRSFNENDLKGIQYSIIAQPSTCMVQISLFELYCHWGIKPSIIVGHSLGEISSSYCSGMIDLDTFCYLIYHRSMVQSKTNGLGRMLSISIGENEYNSKYSSRYPELEIACYNSPSSIVIAGKELILNEIIKELKKDGVFCAILGSPTSFHTSSQLSVKDEILKISFKSKQPTIPIFSTVTTNLYDEMNPFDTKYVYDNIINPVRFTNTISNIYKHIELNYSVNNNSNEVIFIEIAPHPTLSFYLKQMVPEDKKQSVSIFSPLSKKKSNDLFEIQKLISELYCLGYNGIGFNIQLSDHNNTNNQTRVNLPLYQWEDQEYWKLDNLHQYHLSNGPSINHLGISNSNHTPIKSYQTHINIQKKPFQWLKGHQIKGKYYFPGCGYIDNILKIFGESKTDTNPNKELPDILISFIEFKTPLIFMDGISQCLQTNIHSTGKKEYKALFHFKDEKSSSDWVQTSTANFQLFSRGPNLNEDDEQSLFMYNINDLISNQCNLTKLSKQELYSHIKTKCGLNYSGDFQRVDKCYLGYNCSLSEISIIQGVNENRSTFFDSSIIDCCLHGSIGLIDENCQLVFEKLEELTYYSSKVPKTTSQHSKIYVYSKLKPRIGDSYSASIIVMLENGTVLFEMENASFKSTTKIKDPLAMEYPTNEIYSCNLQSKDSLIPSLSSFDHIFKRKIPNEYVDQINIYESFIPKLLFSNINKRCPEITIDEIQSSEIEQLLLKYYKIKEDNDNKWLSRLFTFAFESIKQWYHNEDYDFENVLSPHNFKIFSKSTKIISKLLFPLENDNDEDSPQSLFEGGLLDKFYSSGFSAQNELVGEIIQESIKPILNEKLVFRILEFGGGVGSLSLLVLEKINSLLIQYPNYQIDIEYTWSDISPSFITEAKAKFEKFNDRFNIIYKALNLEQPLIGEKQGLKPQYFDYIIMFNVLHVIKDVKYGVEQIYQLLVPNGHLLFIEPIYKSIIGDGIFGVFDQWWSFQDTEIRKDRCCMKQKTWYKLLKSVNFNDDIRMTPELTCFVIQAQKPSISNLSFSKSETTNYDSIIVFGNKYASNLSNHFIKSIDNGNLQFISTIEELNKIGKYISNESIIYFIKSIDELSVDNFVNITHEYTQINQKLMELNCKCKHVLITNDSTTTNYLSSSLIGAARYYHECPLELFILNFDTPSIIENQNLFKTIEPLINSSINIQREFIINNHKVYYERIKNETKLKSIFKNSSSFESLEQVDNFMISLTPNLEYKVKVKPTSILKENEVEIKVMSTGLNYKDYLIYAGLVESVEPIFGIEFSGIITRISTGSKEFKVGDHVYGIGKSTTSSHIITDIDVISHKPSNISHSEASSIPVVYLTSYHSLYNIGALKNNETILIHSATGGVGLSTLEILKWKGHSGLIFVTVGSNEKEEYLRENYGDMISGIYSTRNKNFVKQIKSKISKLNPFGKSGVDFILNTLSSSDYMDSNFKCLNMSGRIVDLSITHLNSNEFTDNKKFKYNYGYHNIELQYVDKKIIKSTLSIISNAVSSNDLQLIPITHYSIEKVKESIEFINERVHMGKIIINHENQDSIINELIEKQKSINKFDQSIFKQNYKLEPSLLGRNILLTGQSGIVLEILKWILRNSENNSIGNIIILSKSSIKWEMEYLINKVKLINKLGNFFNNIKFHFKSVDISDSGLIDESINKLLIENPDINNIDSIFHFAYTQATCNSDEVDLHHLTQSHSAKSMGAINLHNQSIKRNWKLKNFIMSSSVSSKTSTANQCGYISSNNVLDALSKYRISIGLPTICTNYGLIESTGFVSRNESVAALLSGEGFIPISANLILGTLDLQLQNQAQSSNLILSNFNFTSLNGLPQKSLISKFDYQININEENEKSKSLLKDDNVELTVDQLITFKISEILSTDILKLNKDIILVDYGIDSLVIIQLKNWVDKEFSIPNELTIQKIQNSTINSFIQLVKNSMDKNKK</sequence>
<gene>
    <name type="primary">pks41</name>
    <name type="ORF">DDB_G0291684</name>
</gene>
<dbReference type="EC" id="2.3.1.-"/>
<dbReference type="EMBL" id="AAFI02000177">
    <property type="protein sequence ID" value="EAL61826.1"/>
    <property type="molecule type" value="Genomic_DNA"/>
</dbReference>
<dbReference type="RefSeq" id="XP_635304.1">
    <property type="nucleotide sequence ID" value="XM_630212.1"/>
</dbReference>
<dbReference type="SMR" id="Q54ED6"/>
<dbReference type="STRING" id="44689.Q54ED6"/>
<dbReference type="PaxDb" id="44689-DDB0235301"/>
<dbReference type="EnsemblProtists" id="EAL61826">
    <property type="protein sequence ID" value="EAL61826"/>
    <property type="gene ID" value="DDB_G0291684"/>
</dbReference>
<dbReference type="GeneID" id="8628248"/>
<dbReference type="KEGG" id="ddi:DDB_G0291684"/>
<dbReference type="dictyBase" id="DDB_G0291684">
    <property type="gene designation" value="pks41"/>
</dbReference>
<dbReference type="VEuPathDB" id="AmoebaDB:DDB_G0291684"/>
<dbReference type="eggNOG" id="KOG1202">
    <property type="taxonomic scope" value="Eukaryota"/>
</dbReference>
<dbReference type="HOGENOM" id="CLU_000022_31_0_1"/>
<dbReference type="InParanoid" id="Q54ED6"/>
<dbReference type="PhylomeDB" id="Q54ED6"/>
<dbReference type="PRO" id="PR:Q54ED6"/>
<dbReference type="Proteomes" id="UP000002195">
    <property type="component" value="Chromosome 6"/>
</dbReference>
<dbReference type="GO" id="GO:0004315">
    <property type="term" value="F:3-oxoacyl-[acyl-carrier-protein] synthase activity"/>
    <property type="evidence" value="ECO:0007669"/>
    <property type="project" value="InterPro"/>
</dbReference>
<dbReference type="GO" id="GO:0016491">
    <property type="term" value="F:oxidoreductase activity"/>
    <property type="evidence" value="ECO:0007669"/>
    <property type="project" value="InterPro"/>
</dbReference>
<dbReference type="GO" id="GO:0006633">
    <property type="term" value="P:fatty acid biosynthetic process"/>
    <property type="evidence" value="ECO:0000318"/>
    <property type="project" value="GO_Central"/>
</dbReference>
<dbReference type="CDD" id="cd02440">
    <property type="entry name" value="AdoMet_MTases"/>
    <property type="match status" value="1"/>
</dbReference>
<dbReference type="CDD" id="cd05195">
    <property type="entry name" value="enoyl_red"/>
    <property type="match status" value="1"/>
</dbReference>
<dbReference type="CDD" id="cd08954">
    <property type="entry name" value="KR_1_FAS_SDR_x"/>
    <property type="match status" value="1"/>
</dbReference>
<dbReference type="CDD" id="cd00833">
    <property type="entry name" value="PKS"/>
    <property type="match status" value="1"/>
</dbReference>
<dbReference type="Gene3D" id="3.30.70.3290">
    <property type="match status" value="1"/>
</dbReference>
<dbReference type="Gene3D" id="3.40.47.10">
    <property type="match status" value="1"/>
</dbReference>
<dbReference type="Gene3D" id="1.10.1200.10">
    <property type="entry name" value="ACP-like"/>
    <property type="match status" value="1"/>
</dbReference>
<dbReference type="Gene3D" id="3.40.366.10">
    <property type="entry name" value="Malonyl-Coenzyme A Acyl Carrier Protein, domain 2"/>
    <property type="match status" value="1"/>
</dbReference>
<dbReference type="Gene3D" id="3.90.180.10">
    <property type="entry name" value="Medium-chain alcohol dehydrogenases, catalytic domain"/>
    <property type="match status" value="1"/>
</dbReference>
<dbReference type="Gene3D" id="3.40.50.720">
    <property type="entry name" value="NAD(P)-binding Rossmann-like Domain"/>
    <property type="match status" value="2"/>
</dbReference>
<dbReference type="Gene3D" id="3.10.129.110">
    <property type="entry name" value="Polyketide synthase dehydratase"/>
    <property type="match status" value="1"/>
</dbReference>
<dbReference type="Gene3D" id="3.40.50.150">
    <property type="entry name" value="Vaccinia Virus protein VP39"/>
    <property type="match status" value="1"/>
</dbReference>
<dbReference type="InterPro" id="IPR001227">
    <property type="entry name" value="Ac_transferase_dom_sf"/>
</dbReference>
<dbReference type="InterPro" id="IPR036736">
    <property type="entry name" value="ACP-like_sf"/>
</dbReference>
<dbReference type="InterPro" id="IPR014043">
    <property type="entry name" value="Acyl_transferase_dom"/>
</dbReference>
<dbReference type="InterPro" id="IPR016035">
    <property type="entry name" value="Acyl_Trfase/lysoPLipase"/>
</dbReference>
<dbReference type="InterPro" id="IPR013154">
    <property type="entry name" value="ADH-like_N"/>
</dbReference>
<dbReference type="InterPro" id="IPR011032">
    <property type="entry name" value="GroES-like_sf"/>
</dbReference>
<dbReference type="InterPro" id="IPR018201">
    <property type="entry name" value="Ketoacyl_synth_AS"/>
</dbReference>
<dbReference type="InterPro" id="IPR014031">
    <property type="entry name" value="Ketoacyl_synth_C"/>
</dbReference>
<dbReference type="InterPro" id="IPR014030">
    <property type="entry name" value="Ketoacyl_synth_N"/>
</dbReference>
<dbReference type="InterPro" id="IPR016036">
    <property type="entry name" value="Malonyl_transacylase_ACP-bd"/>
</dbReference>
<dbReference type="InterPro" id="IPR013217">
    <property type="entry name" value="Methyltransf_12"/>
</dbReference>
<dbReference type="InterPro" id="IPR036291">
    <property type="entry name" value="NAD(P)-bd_dom_sf"/>
</dbReference>
<dbReference type="InterPro" id="IPR032821">
    <property type="entry name" value="PKS_assoc"/>
</dbReference>
<dbReference type="InterPro" id="IPR020841">
    <property type="entry name" value="PKS_Beta-ketoAc_synthase_dom"/>
</dbReference>
<dbReference type="InterPro" id="IPR042104">
    <property type="entry name" value="PKS_dehydratase_sf"/>
</dbReference>
<dbReference type="InterPro" id="IPR049551">
    <property type="entry name" value="PKS_DH_C"/>
</dbReference>
<dbReference type="InterPro" id="IPR020843">
    <property type="entry name" value="PKS_ER"/>
</dbReference>
<dbReference type="InterPro" id="IPR013968">
    <property type="entry name" value="PKS_KR"/>
</dbReference>
<dbReference type="InterPro" id="IPR049900">
    <property type="entry name" value="PKS_mFAS_DH"/>
</dbReference>
<dbReference type="InterPro" id="IPR050444">
    <property type="entry name" value="Polyketide_Synthase"/>
</dbReference>
<dbReference type="InterPro" id="IPR009081">
    <property type="entry name" value="PP-bd_ACP"/>
</dbReference>
<dbReference type="InterPro" id="IPR029063">
    <property type="entry name" value="SAM-dependent_MTases_sf"/>
</dbReference>
<dbReference type="InterPro" id="IPR016039">
    <property type="entry name" value="Thiolase-like"/>
</dbReference>
<dbReference type="PANTHER" id="PTHR45681:SF4">
    <property type="entry name" value="BETA-KETOACYL SYNTHASE FAMILY PROTEIN-RELATED"/>
    <property type="match status" value="1"/>
</dbReference>
<dbReference type="PANTHER" id="PTHR45681">
    <property type="entry name" value="POLYKETIDE SYNTHASE 44-RELATED"/>
    <property type="match status" value="1"/>
</dbReference>
<dbReference type="Pfam" id="PF23297">
    <property type="entry name" value="ACP_SdgA_C"/>
    <property type="match status" value="1"/>
</dbReference>
<dbReference type="Pfam" id="PF00698">
    <property type="entry name" value="Acyl_transf_1"/>
    <property type="match status" value="1"/>
</dbReference>
<dbReference type="Pfam" id="PF08240">
    <property type="entry name" value="ADH_N"/>
    <property type="match status" value="1"/>
</dbReference>
<dbReference type="Pfam" id="PF13602">
    <property type="entry name" value="ADH_zinc_N_2"/>
    <property type="match status" value="1"/>
</dbReference>
<dbReference type="Pfam" id="PF16197">
    <property type="entry name" value="KAsynt_C_assoc"/>
    <property type="match status" value="1"/>
</dbReference>
<dbReference type="Pfam" id="PF00109">
    <property type="entry name" value="ketoacyl-synt"/>
    <property type="match status" value="1"/>
</dbReference>
<dbReference type="Pfam" id="PF02801">
    <property type="entry name" value="Ketoacyl-synt_C"/>
    <property type="match status" value="1"/>
</dbReference>
<dbReference type="Pfam" id="PF08659">
    <property type="entry name" value="KR"/>
    <property type="match status" value="1"/>
</dbReference>
<dbReference type="Pfam" id="PF08242">
    <property type="entry name" value="Methyltransf_12"/>
    <property type="match status" value="1"/>
</dbReference>
<dbReference type="Pfam" id="PF14765">
    <property type="entry name" value="PS-DH"/>
    <property type="match status" value="1"/>
</dbReference>
<dbReference type="SMART" id="SM00827">
    <property type="entry name" value="PKS_AT"/>
    <property type="match status" value="1"/>
</dbReference>
<dbReference type="SMART" id="SM00829">
    <property type="entry name" value="PKS_ER"/>
    <property type="match status" value="1"/>
</dbReference>
<dbReference type="SMART" id="SM00825">
    <property type="entry name" value="PKS_KS"/>
    <property type="match status" value="1"/>
</dbReference>
<dbReference type="SUPFAM" id="SSF47336">
    <property type="entry name" value="ACP-like"/>
    <property type="match status" value="1"/>
</dbReference>
<dbReference type="SUPFAM" id="SSF52151">
    <property type="entry name" value="FabD/lysophospholipase-like"/>
    <property type="match status" value="1"/>
</dbReference>
<dbReference type="SUPFAM" id="SSF50129">
    <property type="entry name" value="GroES-like"/>
    <property type="match status" value="1"/>
</dbReference>
<dbReference type="SUPFAM" id="SSF51735">
    <property type="entry name" value="NAD(P)-binding Rossmann-fold domains"/>
    <property type="match status" value="2"/>
</dbReference>
<dbReference type="SUPFAM" id="SSF55048">
    <property type="entry name" value="Probable ACP-binding domain of malonyl-CoA ACP transacylase"/>
    <property type="match status" value="1"/>
</dbReference>
<dbReference type="SUPFAM" id="SSF53335">
    <property type="entry name" value="S-adenosyl-L-methionine-dependent methyltransferases"/>
    <property type="match status" value="1"/>
</dbReference>
<dbReference type="SUPFAM" id="SSF53901">
    <property type="entry name" value="Thiolase-like"/>
    <property type="match status" value="1"/>
</dbReference>
<dbReference type="PROSITE" id="PS50075">
    <property type="entry name" value="CARRIER"/>
    <property type="match status" value="1"/>
</dbReference>
<dbReference type="PROSITE" id="PS00606">
    <property type="entry name" value="KS3_1"/>
    <property type="match status" value="1"/>
</dbReference>
<dbReference type="PROSITE" id="PS52004">
    <property type="entry name" value="KS3_2"/>
    <property type="match status" value="1"/>
</dbReference>
<dbReference type="PROSITE" id="PS52019">
    <property type="entry name" value="PKS_MFAS_DH"/>
    <property type="match status" value="1"/>
</dbReference>
<feature type="chain" id="PRO_0000371398" description="Probable polyketide synthase 41">
    <location>
        <begin position="1"/>
        <end position="2542"/>
    </location>
</feature>
<feature type="domain" description="Ketosynthase family 3 (KS3)" evidence="3">
    <location>
        <begin position="11"/>
        <end position="441"/>
    </location>
</feature>
<feature type="domain" description="PKS/mFAS DH" evidence="4">
    <location>
        <begin position="926"/>
        <end position="1231"/>
    </location>
</feature>
<feature type="domain" description="Carrier" evidence="2">
    <location>
        <begin position="2459"/>
        <end position="2537"/>
    </location>
</feature>
<feature type="region of interest" description="Acyl/malonyl transferase">
    <location>
        <begin position="628"/>
        <end position="661"/>
    </location>
</feature>
<feature type="region of interest" description="N-terminal hotdog fold" evidence="4">
    <location>
        <begin position="926"/>
        <end position="1059"/>
    </location>
</feature>
<feature type="region of interest" description="C-terminal hotdog fold" evidence="4">
    <location>
        <begin position="1083"/>
        <end position="1231"/>
    </location>
</feature>
<feature type="active site" description="For beta-ketoacyl synthase activity" evidence="3">
    <location>
        <position position="177"/>
    </location>
</feature>
<feature type="active site" description="For beta-ketoacyl synthase activity" evidence="3">
    <location>
        <position position="318"/>
    </location>
</feature>
<feature type="active site" description="For beta-ketoacyl synthase activity" evidence="3">
    <location>
        <position position="360"/>
    </location>
</feature>
<feature type="active site" description="For acyl/malonyl transferase activity" evidence="5">
    <location>
        <position position="638"/>
    </location>
</feature>
<feature type="active site" description="Proton acceptor; for dehydratase activity" evidence="4">
    <location>
        <position position="959"/>
    </location>
</feature>
<feature type="active site" description="Proton donor; for dehydratase activity" evidence="4">
    <location>
        <position position="1145"/>
    </location>
</feature>
<feature type="modified residue" description="O-(pantetheine 4'-phosphoryl)serine" evidence="2">
    <location>
        <position position="2496"/>
    </location>
</feature>
<accession>Q54ED6</accession>
<proteinExistence type="inferred from homology"/>
<protein>
    <recommendedName>
        <fullName>Probable polyketide synthase 41</fullName>
        <shortName>dipks41</shortName>
        <ecNumber>2.3.1.-</ecNumber>
    </recommendedName>
</protein>
<organism>
    <name type="scientific">Dictyostelium discoideum</name>
    <name type="common">Social amoeba</name>
    <dbReference type="NCBI Taxonomy" id="44689"/>
    <lineage>
        <taxon>Eukaryota</taxon>
        <taxon>Amoebozoa</taxon>
        <taxon>Evosea</taxon>
        <taxon>Eumycetozoa</taxon>
        <taxon>Dictyostelia</taxon>
        <taxon>Dictyosteliales</taxon>
        <taxon>Dictyosteliaceae</taxon>
        <taxon>Dictyostelium</taxon>
    </lineage>
</organism>
<reference key="1">
    <citation type="journal article" date="2005" name="Nature">
        <title>The genome of the social amoeba Dictyostelium discoideum.</title>
        <authorList>
            <person name="Eichinger L."/>
            <person name="Pachebat J.A."/>
            <person name="Gloeckner G."/>
            <person name="Rajandream M.A."/>
            <person name="Sucgang R."/>
            <person name="Berriman M."/>
            <person name="Song J."/>
            <person name="Olsen R."/>
            <person name="Szafranski K."/>
            <person name="Xu Q."/>
            <person name="Tunggal B."/>
            <person name="Kummerfeld S."/>
            <person name="Madera M."/>
            <person name="Konfortov B.A."/>
            <person name="Rivero F."/>
            <person name="Bankier A.T."/>
            <person name="Lehmann R."/>
            <person name="Hamlin N."/>
            <person name="Davies R."/>
            <person name="Gaudet P."/>
            <person name="Fey P."/>
            <person name="Pilcher K."/>
            <person name="Chen G."/>
            <person name="Saunders D."/>
            <person name="Sodergren E.J."/>
            <person name="Davis P."/>
            <person name="Kerhornou A."/>
            <person name="Nie X."/>
            <person name="Hall N."/>
            <person name="Anjard C."/>
            <person name="Hemphill L."/>
            <person name="Bason N."/>
            <person name="Farbrother P."/>
            <person name="Desany B."/>
            <person name="Just E."/>
            <person name="Morio T."/>
            <person name="Rost R."/>
            <person name="Churcher C.M."/>
            <person name="Cooper J."/>
            <person name="Haydock S."/>
            <person name="van Driessche N."/>
            <person name="Cronin A."/>
            <person name="Goodhead I."/>
            <person name="Muzny D.M."/>
            <person name="Mourier T."/>
            <person name="Pain A."/>
            <person name="Lu M."/>
            <person name="Harper D."/>
            <person name="Lindsay R."/>
            <person name="Hauser H."/>
            <person name="James K.D."/>
            <person name="Quiles M."/>
            <person name="Madan Babu M."/>
            <person name="Saito T."/>
            <person name="Buchrieser C."/>
            <person name="Wardroper A."/>
            <person name="Felder M."/>
            <person name="Thangavelu M."/>
            <person name="Johnson D."/>
            <person name="Knights A."/>
            <person name="Loulseged H."/>
            <person name="Mungall K.L."/>
            <person name="Oliver K."/>
            <person name="Price C."/>
            <person name="Quail M.A."/>
            <person name="Urushihara H."/>
            <person name="Hernandez J."/>
            <person name="Rabbinowitsch E."/>
            <person name="Steffen D."/>
            <person name="Sanders M."/>
            <person name="Ma J."/>
            <person name="Kohara Y."/>
            <person name="Sharp S."/>
            <person name="Simmonds M.N."/>
            <person name="Spiegler S."/>
            <person name="Tivey A."/>
            <person name="Sugano S."/>
            <person name="White B."/>
            <person name="Walker D."/>
            <person name="Woodward J.R."/>
            <person name="Winckler T."/>
            <person name="Tanaka Y."/>
            <person name="Shaulsky G."/>
            <person name="Schleicher M."/>
            <person name="Weinstock G.M."/>
            <person name="Rosenthal A."/>
            <person name="Cox E.C."/>
            <person name="Chisholm R.L."/>
            <person name="Gibbs R.A."/>
            <person name="Loomis W.F."/>
            <person name="Platzer M."/>
            <person name="Kay R.R."/>
            <person name="Williams J.G."/>
            <person name="Dear P.H."/>
            <person name="Noegel A.A."/>
            <person name="Barrell B.G."/>
            <person name="Kuspa A."/>
        </authorList>
    </citation>
    <scope>NUCLEOTIDE SEQUENCE [LARGE SCALE GENOMIC DNA]</scope>
    <source>
        <strain>AX4</strain>
    </source>
</reference>
<reference key="2">
    <citation type="journal article" date="2007" name="Bioinformatics">
        <title>Polyketide synthase genes and the natural products potential of Dictyostelium discoideum.</title>
        <authorList>
            <person name="Zucko J."/>
            <person name="Skunca N."/>
            <person name="Curk T."/>
            <person name="Zupan B."/>
            <person name="Long P.F."/>
            <person name="Cullum J."/>
            <person name="Kessin R.H."/>
            <person name="Hranueli D."/>
        </authorList>
    </citation>
    <scope>IDENTIFICATION</scope>
</reference>
<comment type="function">
    <text evidence="1">Probable polyketide synthase.</text>
</comment>
<comment type="cofactor">
    <cofactor evidence="1">
        <name>pantetheine 4'-phosphate</name>
        <dbReference type="ChEBI" id="CHEBI:47942"/>
    </cofactor>
    <text evidence="1">Binds 1 phosphopantetheine covalently.</text>
</comment>
<comment type="domain">
    <text evidence="1">Modular protein that is responsible for the completion of one condensation-processing cycle. The beta-ketoacyl synthase region is responsible for the actual condensation reaction while the acyl/malonyl transferase region is responsible for incorporating carboxylic acids units onto an acyl carrier protein (ACP) domain (By similarity).</text>
</comment>
<comment type="miscellaneous">
    <text>Encoded by one of the numerous copies of polyketide synthase genes and clustered as a pair pks40/pks41 in chromosome 6.</text>
</comment>
<evidence type="ECO:0000250" key="1"/>
<evidence type="ECO:0000255" key="2">
    <source>
        <dbReference type="PROSITE-ProRule" id="PRU00258"/>
    </source>
</evidence>
<evidence type="ECO:0000255" key="3">
    <source>
        <dbReference type="PROSITE-ProRule" id="PRU01348"/>
    </source>
</evidence>
<evidence type="ECO:0000255" key="4">
    <source>
        <dbReference type="PROSITE-ProRule" id="PRU01363"/>
    </source>
</evidence>
<evidence type="ECO:0000255" key="5">
    <source>
        <dbReference type="PROSITE-ProRule" id="PRU10022"/>
    </source>
</evidence>